<organismHost>
    <name type="scientific">Carthamus tinctorius</name>
    <name type="common">Safflower</name>
    <dbReference type="NCBI Taxonomy" id="4222"/>
</organismHost>
<organismHost>
    <name type="scientific">Cicer arietinum</name>
    <name type="common">Chickpea</name>
    <name type="synonym">Garbanzo</name>
    <dbReference type="NCBI Taxonomy" id="3827"/>
</organismHost>
<organismHost>
    <name type="scientific">Cichorium endivia</name>
    <name type="common">Endive</name>
    <dbReference type="NCBI Taxonomy" id="114280"/>
</organismHost>
<organismHost>
    <name type="scientific">Cichorium intybus</name>
    <name type="common">Chicory</name>
    <dbReference type="NCBI Taxonomy" id="13427"/>
</organismHost>
<organismHost>
    <name type="scientific">Eustoma exaltatum subsp. russellianum</name>
    <name type="common">Bluebells</name>
    <name type="synonym">Eustoma grandiflorum</name>
    <dbReference type="NCBI Taxonomy" id="52518"/>
</organismHost>
<organismHost>
    <name type="scientific">Lactuca</name>
    <dbReference type="NCBI Taxonomy" id="4235"/>
</organismHost>
<organismHost>
    <name type="scientific">Pisum sativum</name>
    <name type="common">Garden pea</name>
    <name type="synonym">Lathyrus oleraceus</name>
    <dbReference type="NCBI Taxonomy" id="3888"/>
</organismHost>
<organismHost>
    <name type="scientific">Spinacia oleracea</name>
    <name type="common">Spinach</name>
    <dbReference type="NCBI Taxonomy" id="3562"/>
</organismHost>
<evidence type="ECO:0000250" key="1"/>
<evidence type="ECO:0000250" key="2">
    <source>
        <dbReference type="UniProtKB" id="P04517"/>
    </source>
</evidence>
<evidence type="ECO:0000250" key="3">
    <source>
        <dbReference type="UniProtKB" id="P0CK11"/>
    </source>
</evidence>
<evidence type="ECO:0000255" key="4"/>
<evidence type="ECO:0000255" key="5">
    <source>
        <dbReference type="PROSITE-ProRule" id="PRU01080"/>
    </source>
</evidence>
<evidence type="ECO:0000255" key="6">
    <source>
        <dbReference type="PROSITE-ProRule" id="PRU01219"/>
    </source>
</evidence>
<evidence type="ECO:0000305" key="7"/>
<keyword id="KW-1031">Host cell junction</keyword>
<keyword id="KW-0945">Host-virus interaction</keyword>
<keyword id="KW-0378">Hydrolase</keyword>
<keyword id="KW-1090">Inhibition of host innate immune response by virus</keyword>
<keyword id="KW-0645">Protease</keyword>
<keyword id="KW-0688">Ribosomal frameshifting</keyword>
<keyword id="KW-0720">Serine protease</keyword>
<keyword id="KW-0941">Suppressor of RNA silencing</keyword>
<keyword id="KW-0813">Transport</keyword>
<keyword id="KW-0899">Viral immunoevasion</keyword>
<keyword id="KW-0916">Viral movement protein</keyword>
<name>MVP_LMVE</name>
<sequence>MATLDNCTQVHHMFAYNREHGTNYTRNHFRRYLAAQRIGFYYDWDDDVYECPTCEAIYHSLDEIKNWHECDPPAFDLNDFITDARLKSAPVPDLGPVIVETPKVEEKQELNFFAATPAPEVLQWKCRGLQFGSFTELETSEPVVSAPKPNCEEPARTIAKPEEPVEQETCGDGKRLLQAQMEVDKAEQDLAFAYLSASLKPRLEGRTTATIARRRDGCLVYKTKPSWSQRKGTKKILKVDTLACKNPYIPAVVDKISIAGGSSASVMHEQQKPKILHTTPSRKVATHYKRTVMNQQTLTALINQVGTIILNAEKEFEVVGCRKQKVTGKGTRHNGVRLVKLKTAHEEGHRRKVDIRIPNGLRSIVTRISARGGWHKTWTDSELSPGSSGYVLNSSKIIGEFGLRRHSIFVVRGRVYGKIIDSQSKVTHTLTHRMVQYSDVARNFWNGYSTCFMHNTPKDILHTCTSDFDVKDCGTVAALLTQTLFQFGKITCGKCAIEYKNLTRDELATRVNKEIDGTIISIQTQHPRFVHVLNFLRLIKQVLNAKNGNFGAFQETERIIGDRMDAPFSHVNKLNAIVIKGNQATSDEMAQASNHVLEIARYFKNRTENIQKGSLKSFRNKISGKAHLNPSLMCDNQLDKNGGFEWGQRSYHAKRFFDGYFETIDPSDGYSKYTIRRNPNGHRKLAIGNLIVSTNFESHRRSMVGEPIEDPGLTNQCVSKEGGAFIYPCCCVTDEYGKPTLSEIKMPTKHHLVLGNAGDPKYVDLPKEAEGKMFVAKDGYCYINIFLAMLVDVPEDQAKDFTKMAREIAVKQLGEWPSMMDVATACNILATFHPDTRRSELPRILVDHATKTFHVIDSYGSITTGYHILKANTVTQLVKFAHESLESEMQHYRVGGEPDKAPRKPAGNVPTLGISDLKNLGVESENEEHSIRPNLQRLIKAIYRPRMMRSLLTEEPYLLILSIVSPGVLMALYNSGSLERTMHEFLQTDQRLSATAQILKHLAKKVSLAKTLTIQNAILEGGAGSLNEILDAPAGRSLSYRLAKQTVEVMMARSDMDKELVDVGFSVLRDQKNELIEKKLSHGFGGLVARIAIVWKIISNASLAAMAGHLYSRSNPNRCRRFERQIQYLGWVCFQKRDLAPKGNLLRRSKES</sequence>
<protein>
    <recommendedName>
        <fullName>P3N-PIPO polyprotein</fullName>
    </recommendedName>
    <component>
        <recommendedName>
            <fullName>P1 protease</fullName>
            <ecNumber>3.4.21.-</ecNumber>
        </recommendedName>
        <alternativeName>
            <fullName>N-terminal protein</fullName>
        </alternativeName>
        <alternativeName>
            <fullName>P1 proteinase</fullName>
        </alternativeName>
    </component>
    <component>
        <recommendedName>
            <fullName>Helper component proteinase</fullName>
            <shortName>HC-pro</shortName>
            <ecNumber>3.4.22.45</ecNumber>
        </recommendedName>
    </component>
    <component>
        <recommendedName>
            <fullName>Movement protein P3N-PIPO</fullName>
        </recommendedName>
        <alternativeName>
            <fullName>Pretty interesting potyviridae ORF</fullName>
            <shortName>PIPO</shortName>
        </alternativeName>
    </component>
</protein>
<accession>P0CW79</accession>
<proteinExistence type="inferred from homology"/>
<comment type="function">
    <molecule>Helper component proteinase</molecule>
    <text evidence="2">Required for aphid transmission and also has proteolytic activity. Only cleaves a Gly-Gly dipeptide at its own C-terminus. Interacts with virions and aphid stylets. Acts as a suppressor of RNA-mediated gene silencing, also known as post-transcriptional gene silencing (PTGS), a mechanism of plant viral defense that limits the accumulation of viral RNAs. May have RNA-binding activity.</text>
</comment>
<comment type="function">
    <molecule>Movement protein P3N-PIPO</molecule>
    <text evidence="3">Allows efficient cell to cell propagation, by bypassing the host cell wall barrier. Transports viral genome to neighboring plant cells directly through plasmosdesmata, without any budding.</text>
</comment>
<comment type="catalytic activity">
    <molecule>Helper component proteinase</molecule>
    <reaction>
        <text>Hydrolyzes a Gly-|-Gly bond at its own C-terminus, commonly in the sequence -Tyr-Xaa-Val-Gly-|-Gly, in the processing of the potyviral polyprotein.</text>
        <dbReference type="EC" id="3.4.22.45"/>
    </reaction>
</comment>
<comment type="subunit">
    <molecule>Movement protein P3N-PIPO</molecule>
    <text evidence="3">Interacts (via PIPO domain) with host PCaP1 protein; this interaction may help to anchor the movement complex to the plasma membrane from which the complex could move to the plasmodesmata.</text>
</comment>
<comment type="subcellular location">
    <molecule>Movement protein P3N-PIPO</molecule>
    <subcellularLocation>
        <location evidence="3">Host cell junction</location>
        <location evidence="3">Host plasmodesma</location>
    </subcellularLocation>
</comment>
<comment type="alternative products">
    <event type="ribosomal frameshifting"/>
    <isoform>
        <id>P0CW79-1</id>
        <name>P3N-PIPO polyprotein</name>
        <sequence type="displayed"/>
    </isoform>
    <isoform>
        <id>P89876-1</id>
        <name>Genome polyprotein</name>
        <sequence type="external"/>
    </isoform>
</comment>
<comment type="domain">
    <text evidence="1">The N-terminus of helper component proteinase is involved in interaction with stylets. The central part is involved in interaction with virions and the C-terminus is involved in cell-to cell movement of the virus (By similarity).</text>
</comment>
<comment type="PTM">
    <text evidence="1">Potyviral RNA is expressed as two polyproteins which undergo post-translational proteolytic processing. Genome polyprotein is processed by NIa-pro, P1 and HC-pro proteinases resulting in the production of at least ten individual proteins. P3N-PIPO is cleaved by P1 and HC-pro proteinases resulting in the production of three individual proteins. The P1 proteinase and the HC-pro cleave only their respective C-termini autocatalytically (By similarity).</text>
</comment>
<comment type="miscellaneous">
    <molecule>Isoform P3N-PIPO polyprotein</molecule>
    <text>Produced by -1 ribosomal frameshifting in P3 ORF.</text>
</comment>
<comment type="similarity">
    <text evidence="7">Belongs to the potyviridae P3N-PIPO polyprotein family.</text>
</comment>
<reference key="1">
    <citation type="journal article" date="1997" name="Virus Res.">
        <title>Comparison of the complete nucleotide sequences of two isolates of lettuce mosaic virus differing in their biological properties.</title>
        <authorList>
            <person name="Revers F."/>
            <person name="Yang S.J."/>
            <person name="Walter J."/>
            <person name="Souche S."/>
            <person name="Lot H."/>
            <person name="Le Gall O."/>
            <person name="Candresse T."/>
            <person name="Dunez J."/>
        </authorList>
    </citation>
    <scope>NUCLEOTIDE SEQUENCE [GENOMIC RNA]</scope>
</reference>
<dbReference type="EC" id="3.4.21.-"/>
<dbReference type="EC" id="3.4.22.45"/>
<dbReference type="EMBL" id="X97705">
    <property type="status" value="NOT_ANNOTATED_CDS"/>
    <property type="molecule type" value="Genomic_RNA"/>
</dbReference>
<dbReference type="SMR" id="P0CW79"/>
<dbReference type="Proteomes" id="UP000008378">
    <property type="component" value="Segment"/>
</dbReference>
<dbReference type="GO" id="GO:0044219">
    <property type="term" value="C:host cell plasmodesma"/>
    <property type="evidence" value="ECO:0007669"/>
    <property type="project" value="UniProtKB-SubCell"/>
</dbReference>
<dbReference type="GO" id="GO:0004197">
    <property type="term" value="F:cysteine-type endopeptidase activity"/>
    <property type="evidence" value="ECO:0007669"/>
    <property type="project" value="InterPro"/>
</dbReference>
<dbReference type="GO" id="GO:0008236">
    <property type="term" value="F:serine-type peptidase activity"/>
    <property type="evidence" value="ECO:0007669"/>
    <property type="project" value="UniProtKB-KW"/>
</dbReference>
<dbReference type="GO" id="GO:0006508">
    <property type="term" value="P:proteolysis"/>
    <property type="evidence" value="ECO:0007669"/>
    <property type="project" value="UniProtKB-KW"/>
</dbReference>
<dbReference type="GO" id="GO:0052170">
    <property type="term" value="P:symbiont-mediated suppression of host innate immune response"/>
    <property type="evidence" value="ECO:0007669"/>
    <property type="project" value="UniProtKB-KW"/>
</dbReference>
<dbReference type="GO" id="GO:0046740">
    <property type="term" value="P:transport of virus in host, cell to cell"/>
    <property type="evidence" value="ECO:0007669"/>
    <property type="project" value="UniProtKB-KW"/>
</dbReference>
<dbReference type="GO" id="GO:0075523">
    <property type="term" value="P:viral translational frameshifting"/>
    <property type="evidence" value="ECO:0007669"/>
    <property type="project" value="UniProtKB-KW"/>
</dbReference>
<dbReference type="Gene3D" id="3.90.70.150">
    <property type="entry name" value="Helper component proteinase"/>
    <property type="match status" value="1"/>
</dbReference>
<dbReference type="InterPro" id="IPR001456">
    <property type="entry name" value="HC-pro"/>
</dbReference>
<dbReference type="InterPro" id="IPR031159">
    <property type="entry name" value="HC_PRO_CPD_dom"/>
</dbReference>
<dbReference type="InterPro" id="IPR042308">
    <property type="entry name" value="HC_PRO_CPD_sf"/>
</dbReference>
<dbReference type="InterPro" id="IPR002540">
    <property type="entry name" value="Pept_S30_P1_potyvir"/>
</dbReference>
<dbReference type="InterPro" id="IPR039560">
    <property type="entry name" value="Potyvirid-P3"/>
</dbReference>
<dbReference type="Pfam" id="PF00851">
    <property type="entry name" value="Peptidase_C6"/>
    <property type="match status" value="1"/>
</dbReference>
<dbReference type="Pfam" id="PF01577">
    <property type="entry name" value="Peptidase_S30"/>
    <property type="match status" value="1"/>
</dbReference>
<dbReference type="Pfam" id="PF13608">
    <property type="entry name" value="Potyvirid-P3"/>
    <property type="match status" value="1"/>
</dbReference>
<dbReference type="PROSITE" id="PS51744">
    <property type="entry name" value="HC_PRO_CPD"/>
    <property type="match status" value="1"/>
</dbReference>
<dbReference type="PROSITE" id="PS51871">
    <property type="entry name" value="PV_P1_PRO"/>
    <property type="match status" value="1"/>
</dbReference>
<feature type="chain" id="PRO_0000420054" description="P3N-PIPO polyprotein">
    <location>
        <begin position="1"/>
        <end position="1152"/>
    </location>
</feature>
<feature type="chain" id="PRO_0000420055" description="P1 protease" evidence="4">
    <location>
        <begin position="1"/>
        <end position="437"/>
    </location>
</feature>
<feature type="chain" id="PRO_0000420056" description="Helper component proteinase" evidence="4">
    <location>
        <begin position="438"/>
        <end position="895"/>
    </location>
</feature>
<feature type="chain" id="PRO_0000408540" description="Movement protein P3N-PIPO">
    <location>
        <begin position="896"/>
        <end position="1152"/>
    </location>
</feature>
<feature type="domain" description="Peptidase S30" evidence="6">
    <location>
        <begin position="292"/>
        <end position="437"/>
    </location>
</feature>
<feature type="domain" description="Peptidase C6" evidence="5">
    <location>
        <begin position="773"/>
        <end position="895"/>
    </location>
</feature>
<feature type="short sequence motif" description="Involved in interaction with stylet and aphid transmission" evidence="1">
    <location>
        <begin position="489"/>
        <end position="492"/>
    </location>
</feature>
<feature type="short sequence motif" description="Involved in virions binding and aphid transmission" evidence="1">
    <location>
        <begin position="747"/>
        <end position="749"/>
    </location>
</feature>
<feature type="active site" description="For P1 proteinase activity" evidence="6">
    <location>
        <position position="345"/>
    </location>
</feature>
<feature type="active site" description="For P1 proteinase activity" evidence="6">
    <location>
        <position position="354"/>
    </location>
</feature>
<feature type="active site" description="For P1 proteinase activity" evidence="6">
    <location>
        <position position="388"/>
    </location>
</feature>
<feature type="active site" description="For helper component proteinase activity" evidence="5">
    <location>
        <position position="781"/>
    </location>
</feature>
<feature type="active site" description="For helper component proteinase activity" evidence="5">
    <location>
        <position position="854"/>
    </location>
</feature>
<feature type="site" description="Cleavage; by P1 proteinase" evidence="6">
    <location>
        <begin position="437"/>
        <end position="438"/>
    </location>
</feature>
<feature type="site" description="Cleavage; by autolysis" evidence="5">
    <location>
        <begin position="895"/>
        <end position="896"/>
    </location>
</feature>
<feature type="unsure residue">
    <location>
        <begin position="1076"/>
        <end position="1082"/>
    </location>
</feature>
<organism>
    <name type="scientific">Lettuce mosaic virus (strain E)</name>
    <name type="common">LMV</name>
    <dbReference type="NCBI Taxonomy" id="117131"/>
    <lineage>
        <taxon>Viruses</taxon>
        <taxon>Riboviria</taxon>
        <taxon>Orthornavirae</taxon>
        <taxon>Pisuviricota</taxon>
        <taxon>Stelpaviricetes</taxon>
        <taxon>Patatavirales</taxon>
        <taxon>Potyviridae</taxon>
        <taxon>Potyvirus</taxon>
        <taxon>Potyvirus lactucae</taxon>
        <taxon>Lettuce mosaic virus</taxon>
    </lineage>
</organism>